<comment type="function">
    <text evidence="1">Two distinct, membrane-bound, FAD-containing enzymes are responsible for the catalysis of fumarate and succinate interconversion; fumarate reductase is used in anaerobic growth, and succinate dehydrogenase is used in aerobic growth. Anchors the catalytic components of the fumarate reductase complex to the cell inner membrane, binds quinones.</text>
</comment>
<comment type="subunit">
    <text evidence="1">Part of an enzyme complex containing four subunits: a flavoprotein (FrdA), an iron-sulfur protein (FrdB), and two hydrophobic anchor proteins (FrdC and FrdD).</text>
</comment>
<comment type="subcellular location">
    <subcellularLocation>
        <location evidence="1 2">Cell inner membrane</location>
        <topology evidence="1">Multi-pass membrane protein</topology>
    </subcellularLocation>
</comment>
<comment type="similarity">
    <text evidence="1">Belongs to the FrdC family.</text>
</comment>
<name>FRDC_PROVU</name>
<feature type="chain" id="PRO_0000196533" description="Fumarate reductase subunit C">
    <location>
        <begin position="1"/>
        <end position="131"/>
    </location>
</feature>
<feature type="transmembrane region" description="Helical" evidence="1">
    <location>
        <begin position="30"/>
        <end position="50"/>
    </location>
</feature>
<feature type="transmembrane region" description="Helical" evidence="1">
    <location>
        <begin position="58"/>
        <end position="78"/>
    </location>
</feature>
<feature type="transmembrane region" description="Helical" evidence="1">
    <location>
        <begin position="109"/>
        <end position="129"/>
    </location>
</feature>
<sequence>MTTKRKPYVRGMQPNWWTKLGFYRFYITREGTCLPQLWFSLVVLFGVFALKNGPESWAGFVGFLSNPILMLINIVTLIATVFHTATWFKLAPKAVNIVVKDEKLPQEPIVRGLWGLTIVVTVVILAVALIV</sequence>
<proteinExistence type="inferred from homology"/>
<protein>
    <recommendedName>
        <fullName evidence="1">Fumarate reductase subunit C</fullName>
    </recommendedName>
    <alternativeName>
        <fullName evidence="1">Fumarate reductase 15 kDa hydrophobic protein</fullName>
    </alternativeName>
    <alternativeName>
        <fullName evidence="1">Quinol-fumarate reductase subunit C</fullName>
        <shortName evidence="1">QFR subunit C</shortName>
    </alternativeName>
</protein>
<gene>
    <name evidence="1" type="primary">frdC</name>
</gene>
<organism>
    <name type="scientific">Proteus vulgaris</name>
    <dbReference type="NCBI Taxonomy" id="585"/>
    <lineage>
        <taxon>Bacteria</taxon>
        <taxon>Pseudomonadati</taxon>
        <taxon>Pseudomonadota</taxon>
        <taxon>Gammaproteobacteria</taxon>
        <taxon>Enterobacterales</taxon>
        <taxon>Morganellaceae</taxon>
        <taxon>Proteus</taxon>
    </lineage>
</organism>
<accession>P20923</accession>
<evidence type="ECO:0000255" key="1">
    <source>
        <dbReference type="HAMAP-Rule" id="MF_00708"/>
    </source>
</evidence>
<evidence type="ECO:0000305" key="2"/>
<reference key="1">
    <citation type="journal article" date="1987" name="Eur. J. Biochem.">
        <title>Nucleotide sequence and comparative analysis of the frd operon encoding the fumarate reductase of Proteus vulgaris. Extensive sequence divergence of the membrane anchors and absence of an frd-linked ampC cephalosporinase gene.</title>
        <authorList>
            <person name="Cole S.T."/>
        </authorList>
    </citation>
    <scope>NUCLEOTIDE SEQUENCE [GENOMIC DNA]</scope>
</reference>
<dbReference type="EMBL" id="X06144">
    <property type="protein sequence ID" value="CAA29503.1"/>
    <property type="molecule type" value="Genomic_DNA"/>
</dbReference>
<dbReference type="PIR" id="S00109">
    <property type="entry name" value="RDEB15"/>
</dbReference>
<dbReference type="SMR" id="P20923"/>
<dbReference type="STRING" id="585.DR95_2060"/>
<dbReference type="eggNOG" id="COG3029">
    <property type="taxonomic scope" value="Bacteria"/>
</dbReference>
<dbReference type="GO" id="GO:0045283">
    <property type="term" value="C:fumarate reductase complex"/>
    <property type="evidence" value="ECO:0007669"/>
    <property type="project" value="UniProtKB-UniRule"/>
</dbReference>
<dbReference type="GO" id="GO:0005886">
    <property type="term" value="C:plasma membrane"/>
    <property type="evidence" value="ECO:0007669"/>
    <property type="project" value="UniProtKB-SubCell"/>
</dbReference>
<dbReference type="GO" id="GO:0000104">
    <property type="term" value="F:succinate dehydrogenase activity"/>
    <property type="evidence" value="ECO:0007669"/>
    <property type="project" value="UniProtKB-UniRule"/>
</dbReference>
<dbReference type="CDD" id="cd00546">
    <property type="entry name" value="QFR_TypeD_subunitC"/>
    <property type="match status" value="1"/>
</dbReference>
<dbReference type="Gene3D" id="1.20.1300.10">
    <property type="entry name" value="Fumarate reductase/succinate dehydrogenase, transmembrane subunit"/>
    <property type="match status" value="1"/>
</dbReference>
<dbReference type="HAMAP" id="MF_00708">
    <property type="entry name" value="Fumarate_red_C"/>
    <property type="match status" value="1"/>
</dbReference>
<dbReference type="InterPro" id="IPR003510">
    <property type="entry name" value="Fumarate_red_C"/>
</dbReference>
<dbReference type="InterPro" id="IPR034804">
    <property type="entry name" value="SQR/QFR_C/D"/>
</dbReference>
<dbReference type="NCBIfam" id="NF003445">
    <property type="entry name" value="PRK04987.1"/>
    <property type="match status" value="1"/>
</dbReference>
<dbReference type="Pfam" id="PF02300">
    <property type="entry name" value="Fumarate_red_C"/>
    <property type="match status" value="1"/>
</dbReference>
<dbReference type="PIRSF" id="PIRSF000180">
    <property type="entry name" value="FrdC"/>
    <property type="match status" value="1"/>
</dbReference>
<dbReference type="SUPFAM" id="SSF81343">
    <property type="entry name" value="Fumarate reductase respiratory complex transmembrane subunits"/>
    <property type="match status" value="1"/>
</dbReference>
<keyword id="KW-0997">Cell inner membrane</keyword>
<keyword id="KW-1003">Cell membrane</keyword>
<keyword id="KW-0472">Membrane</keyword>
<keyword id="KW-0812">Transmembrane</keyword>
<keyword id="KW-1133">Transmembrane helix</keyword>